<keyword id="KW-0067">ATP-binding</keyword>
<keyword id="KW-0143">Chaperone</keyword>
<keyword id="KW-0963">Cytoplasm</keyword>
<keyword id="KW-0413">Isomerase</keyword>
<keyword id="KW-0547">Nucleotide-binding</keyword>
<dbReference type="EC" id="5.6.1.7" evidence="1"/>
<dbReference type="EMBL" id="AP006628">
    <property type="protein sequence ID" value="BAD04206.1"/>
    <property type="molecule type" value="Genomic_DNA"/>
</dbReference>
<dbReference type="SMR" id="Q6YR94"/>
<dbReference type="STRING" id="262768.PAM_121"/>
<dbReference type="KEGG" id="poy:PAM_121"/>
<dbReference type="eggNOG" id="COG0459">
    <property type="taxonomic scope" value="Bacteria"/>
</dbReference>
<dbReference type="HOGENOM" id="CLU_016503_3_0_14"/>
<dbReference type="BioCyc" id="OYEL262768:G1G26-153-MONOMER"/>
<dbReference type="Proteomes" id="UP000002523">
    <property type="component" value="Chromosome"/>
</dbReference>
<dbReference type="GO" id="GO:0005737">
    <property type="term" value="C:cytoplasm"/>
    <property type="evidence" value="ECO:0007669"/>
    <property type="project" value="UniProtKB-SubCell"/>
</dbReference>
<dbReference type="GO" id="GO:0005524">
    <property type="term" value="F:ATP binding"/>
    <property type="evidence" value="ECO:0007669"/>
    <property type="project" value="UniProtKB-UniRule"/>
</dbReference>
<dbReference type="GO" id="GO:0140662">
    <property type="term" value="F:ATP-dependent protein folding chaperone"/>
    <property type="evidence" value="ECO:0007669"/>
    <property type="project" value="InterPro"/>
</dbReference>
<dbReference type="GO" id="GO:0016853">
    <property type="term" value="F:isomerase activity"/>
    <property type="evidence" value="ECO:0007669"/>
    <property type="project" value="UniProtKB-KW"/>
</dbReference>
<dbReference type="GO" id="GO:0051082">
    <property type="term" value="F:unfolded protein binding"/>
    <property type="evidence" value="ECO:0007669"/>
    <property type="project" value="UniProtKB-UniRule"/>
</dbReference>
<dbReference type="GO" id="GO:0042026">
    <property type="term" value="P:protein refolding"/>
    <property type="evidence" value="ECO:0007669"/>
    <property type="project" value="UniProtKB-UniRule"/>
</dbReference>
<dbReference type="CDD" id="cd03344">
    <property type="entry name" value="GroEL"/>
    <property type="match status" value="1"/>
</dbReference>
<dbReference type="FunFam" id="3.50.7.10:FF:000001">
    <property type="entry name" value="60 kDa chaperonin"/>
    <property type="match status" value="1"/>
</dbReference>
<dbReference type="Gene3D" id="3.50.7.10">
    <property type="entry name" value="GroEL"/>
    <property type="match status" value="1"/>
</dbReference>
<dbReference type="Gene3D" id="1.10.560.10">
    <property type="entry name" value="GroEL-like equatorial domain"/>
    <property type="match status" value="1"/>
</dbReference>
<dbReference type="Gene3D" id="3.30.260.10">
    <property type="entry name" value="TCP-1-like chaperonin intermediate domain"/>
    <property type="match status" value="1"/>
</dbReference>
<dbReference type="HAMAP" id="MF_00600">
    <property type="entry name" value="CH60"/>
    <property type="match status" value="1"/>
</dbReference>
<dbReference type="InterPro" id="IPR001844">
    <property type="entry name" value="Cpn60/GroEL"/>
</dbReference>
<dbReference type="InterPro" id="IPR002423">
    <property type="entry name" value="Cpn60/GroEL/TCP-1"/>
</dbReference>
<dbReference type="InterPro" id="IPR027409">
    <property type="entry name" value="GroEL-like_apical_dom_sf"/>
</dbReference>
<dbReference type="InterPro" id="IPR027413">
    <property type="entry name" value="GROEL-like_equatorial_sf"/>
</dbReference>
<dbReference type="InterPro" id="IPR027410">
    <property type="entry name" value="TCP-1-like_intermed_sf"/>
</dbReference>
<dbReference type="NCBIfam" id="TIGR02348">
    <property type="entry name" value="GroEL"/>
    <property type="match status" value="1"/>
</dbReference>
<dbReference type="NCBIfam" id="NF000592">
    <property type="entry name" value="PRK00013.1"/>
    <property type="match status" value="1"/>
</dbReference>
<dbReference type="NCBIfam" id="NF009487">
    <property type="entry name" value="PRK12849.1"/>
    <property type="match status" value="1"/>
</dbReference>
<dbReference type="NCBIfam" id="NF009488">
    <property type="entry name" value="PRK12850.1"/>
    <property type="match status" value="1"/>
</dbReference>
<dbReference type="NCBIfam" id="NF009489">
    <property type="entry name" value="PRK12851.1"/>
    <property type="match status" value="1"/>
</dbReference>
<dbReference type="PANTHER" id="PTHR45633">
    <property type="entry name" value="60 KDA HEAT SHOCK PROTEIN, MITOCHONDRIAL"/>
    <property type="match status" value="1"/>
</dbReference>
<dbReference type="Pfam" id="PF00118">
    <property type="entry name" value="Cpn60_TCP1"/>
    <property type="match status" value="1"/>
</dbReference>
<dbReference type="PRINTS" id="PR00298">
    <property type="entry name" value="CHAPERONIN60"/>
</dbReference>
<dbReference type="SUPFAM" id="SSF52029">
    <property type="entry name" value="GroEL apical domain-like"/>
    <property type="match status" value="1"/>
</dbReference>
<dbReference type="SUPFAM" id="SSF48592">
    <property type="entry name" value="GroEL equatorial domain-like"/>
    <property type="match status" value="1"/>
</dbReference>
<dbReference type="SUPFAM" id="SSF54849">
    <property type="entry name" value="GroEL-intermediate domain like"/>
    <property type="match status" value="1"/>
</dbReference>
<comment type="function">
    <text evidence="1">Together with its co-chaperonin GroES, plays an essential role in assisting protein folding. The GroEL-GroES system forms a nano-cage that allows encapsulation of the non-native substrate proteins and provides a physical environment optimized to promote and accelerate protein folding.</text>
</comment>
<comment type="catalytic activity">
    <reaction evidence="1">
        <text>ATP + H2O + a folded polypeptide = ADP + phosphate + an unfolded polypeptide.</text>
        <dbReference type="EC" id="5.6.1.7"/>
    </reaction>
</comment>
<comment type="subunit">
    <text evidence="1">Forms a cylinder of 14 subunits composed of two heptameric rings stacked back-to-back. Interacts with the co-chaperonin GroES.</text>
</comment>
<comment type="subcellular location">
    <subcellularLocation>
        <location evidence="1">Cytoplasm</location>
    </subcellularLocation>
</comment>
<comment type="similarity">
    <text evidence="1">Belongs to the chaperonin (HSP60) family.</text>
</comment>
<feature type="chain" id="PRO_0000063467" description="Chaperonin GroEL">
    <location>
        <begin position="1"/>
        <end position="536"/>
    </location>
</feature>
<feature type="binding site" evidence="1">
    <location>
        <begin position="29"/>
        <end position="32"/>
    </location>
    <ligand>
        <name>ATP</name>
        <dbReference type="ChEBI" id="CHEBI:30616"/>
    </ligand>
</feature>
<feature type="binding site" evidence="1">
    <location>
        <begin position="86"/>
        <end position="90"/>
    </location>
    <ligand>
        <name>ATP</name>
        <dbReference type="ChEBI" id="CHEBI:30616"/>
    </ligand>
</feature>
<feature type="binding site" evidence="1">
    <location>
        <position position="412"/>
    </location>
    <ligand>
        <name>ATP</name>
        <dbReference type="ChEBI" id="CHEBI:30616"/>
    </ligand>
</feature>
<feature type="binding site" evidence="1">
    <location>
        <position position="493"/>
    </location>
    <ligand>
        <name>ATP</name>
        <dbReference type="ChEBI" id="CHEBI:30616"/>
    </ligand>
</feature>
<sequence>MSKKILYGKEARKALLQGVDAIANTVKVTLGPKGRNVILEKAYDSPAIVNDGVSIAKEIELKNPYQNMGAKLVYEVASKTNDKAGDGTTTATVLAQSMIHRGFDAIDAGANPVLVKEGIELAALTVAKKLLAKSKKVDAQEDIQNVAAVSSGSQEIGKIIAQAMQKVGKDGVINVDESKGFETELEVVEGLQYDKGYASPYFVSDRESMTVQLENALVLVTDHKISTVQEIVPILEEVVKASRPLLIVAEAVENEVLGVLVANKLRGTFNVVVTNAPGFGDNQKEMLQDIAVLTKANFVSKELNMKLADLKMDDLGNINKAIIKKDNTTLISNSKSPELEKRIQVLKTQIKNATSDYETKNLQERLAKLSGGVALIKVGAATDTELKDKKLRIEDALNATKAAITEGIVVGGGKALVEVYQELKDTLVSDNKEVQQGIDVVVQSLLVPTYQIAYNAGFSGKDVVKQQLLQPLNFGFNAKEGKYVCLLKEGIIDPTKVTRQAVLNAASISALMITTEAAVVSLKENKDNNFDLGTQE</sequence>
<evidence type="ECO:0000255" key="1">
    <source>
        <dbReference type="HAMAP-Rule" id="MF_00600"/>
    </source>
</evidence>
<organism>
    <name type="scientific">Onion yellows phytoplasma (strain OY-M)</name>
    <dbReference type="NCBI Taxonomy" id="262768"/>
    <lineage>
        <taxon>Bacteria</taxon>
        <taxon>Bacillati</taxon>
        <taxon>Mycoplasmatota</taxon>
        <taxon>Mollicutes</taxon>
        <taxon>Acholeplasmatales</taxon>
        <taxon>Acholeplasmataceae</taxon>
        <taxon>Candidatus Phytoplasma</taxon>
        <taxon>16SrI (Aster yellows group)</taxon>
    </lineage>
</organism>
<protein>
    <recommendedName>
        <fullName evidence="1">Chaperonin GroEL</fullName>
        <ecNumber evidence="1">5.6.1.7</ecNumber>
    </recommendedName>
    <alternativeName>
        <fullName evidence="1">60 kDa chaperonin</fullName>
    </alternativeName>
    <alternativeName>
        <fullName evidence="1">Chaperonin-60</fullName>
        <shortName evidence="1">Cpn60</shortName>
    </alternativeName>
</protein>
<proteinExistence type="inferred from homology"/>
<gene>
    <name evidence="1" type="primary">groEL</name>
    <name evidence="1" type="synonym">groL</name>
    <name type="ordered locus">PAM_121</name>
</gene>
<reference key="1">
    <citation type="journal article" date="2004" name="Nat. Genet.">
        <title>Reductive evolution suggested from the complete genome sequence of a plant-pathogenic phytoplasma.</title>
        <authorList>
            <person name="Oshima K."/>
            <person name="Kakizawa S."/>
            <person name="Nishigawa H."/>
            <person name="Jung H.-Y."/>
            <person name="Wei W."/>
            <person name="Suzuki S."/>
            <person name="Arashida R."/>
            <person name="Nakata D."/>
            <person name="Miyata S."/>
            <person name="Ugaki M."/>
            <person name="Namba S."/>
        </authorList>
    </citation>
    <scope>NUCLEOTIDE SEQUENCE [LARGE SCALE GENOMIC DNA]</scope>
    <source>
        <strain>OY-M</strain>
    </source>
</reference>
<name>CH60_ONYPE</name>
<accession>Q6YR94</accession>